<evidence type="ECO:0000255" key="1">
    <source>
        <dbReference type="HAMAP-Rule" id="MF_01517"/>
    </source>
</evidence>
<evidence type="ECO:0000269" key="2">
    <source>
    </source>
</evidence>
<evidence type="ECO:0000305" key="3"/>
<evidence type="ECO:0000305" key="4">
    <source>
    </source>
</evidence>
<evidence type="ECO:0007829" key="5">
    <source>
        <dbReference type="PDB" id="1B8P"/>
    </source>
</evidence>
<protein>
    <recommendedName>
        <fullName evidence="1">Malate dehydrogenase</fullName>
        <ecNumber evidence="1">1.1.1.37</ecNumber>
    </recommendedName>
</protein>
<proteinExistence type="evidence at protein level"/>
<sequence>MAKTPMRVAVTGAAGQICYSLLFRIANGDMLGKDQPVILQLLEIPNEKAQKALQGVMMEIDDCAFPLLAGMTAHADPMTAFKDADVALLVGARPRGPGMERKDLLEANAQIFTVQGKAIDAVASRNIKVLVVGNPANTNAYIAMKSAPSLPAKNFTAMLRLDHNRALSQIAAKTGKPVSSIEKLFVWGNHSPTMYADYRYAQIDGASVKDMINDDAWNRDTFLPTVGKRGAAIIDARGVSSAASAANAAIDHIHDWVLGTAGKWTTMGIPSDGSYGIPEGVIFGFPVTTENGEYKIVQGLSIDAFSQERINVTLNELLEEQNGVQHLLG</sequence>
<keyword id="KW-0002">3D-structure</keyword>
<keyword id="KW-0903">Direct protein sequencing</keyword>
<keyword id="KW-0520">NAD</keyword>
<keyword id="KW-0560">Oxidoreductase</keyword>
<keyword id="KW-0816">Tricarboxylic acid cycle</keyword>
<gene>
    <name evidence="1" type="primary">mdh</name>
</gene>
<comment type="function">
    <text evidence="1">Catalyzes the reversible oxidation of malate to oxaloacetate.</text>
</comment>
<comment type="catalytic activity">
    <reaction evidence="1">
        <text>(S)-malate + NAD(+) = oxaloacetate + NADH + H(+)</text>
        <dbReference type="Rhea" id="RHEA:21432"/>
        <dbReference type="ChEBI" id="CHEBI:15378"/>
        <dbReference type="ChEBI" id="CHEBI:15589"/>
        <dbReference type="ChEBI" id="CHEBI:16452"/>
        <dbReference type="ChEBI" id="CHEBI:57540"/>
        <dbReference type="ChEBI" id="CHEBI:57945"/>
        <dbReference type="EC" id="1.1.1.37"/>
    </reaction>
</comment>
<comment type="subunit">
    <text evidence="2">Homodimer.</text>
</comment>
<comment type="similarity">
    <text evidence="1 3">Belongs to the LDH/MDH superfamily. MDH type 2 family.</text>
</comment>
<reference key="1">
    <citation type="journal article" date="1999" name="J. Biol. Chem.">
        <title>Structural basis for cold adaptation. Sequence, biochemical properties, and crystal structure of malate dehydrogenase from a psychrophile Aquaspirillium arcticum.</title>
        <authorList>
            <person name="Kim S.-Y."/>
            <person name="Hwang K.Y."/>
            <person name="Kim S.-H."/>
            <person name="Sung H.-C."/>
            <person name="Han Y.S."/>
            <person name="Cho Y."/>
        </authorList>
    </citation>
    <scope>NUCLEOTIDE SEQUENCE [GENOMIC DNA]</scope>
    <scope>PROTEIN SEQUENCE OF 2-22 AND 103-123</scope>
    <scope>X-RAY CRYSTALLOGRAPHY (1.9 ANGSTROMS) IN COMPLEX WITH NAD AND SUBSTRATE ANALOG</scope>
    <scope>SUBUNIT</scope>
</reference>
<name>MDH_AQUAR</name>
<feature type="initiator methionine" description="Removed" evidence="2">
    <location>
        <position position="1"/>
    </location>
</feature>
<feature type="chain" id="PRO_0000113346" description="Malate dehydrogenase">
    <location>
        <begin position="2"/>
        <end position="329"/>
    </location>
</feature>
<feature type="active site" description="Proton acceptor" evidence="1">
    <location>
        <position position="190"/>
    </location>
</feature>
<feature type="binding site" evidence="1 2">
    <location>
        <begin position="12"/>
        <end position="18"/>
    </location>
    <ligand>
        <name>NAD(+)</name>
        <dbReference type="ChEBI" id="CHEBI:57540"/>
    </ligand>
</feature>
<feature type="binding site" evidence="1">
    <location>
        <position position="95"/>
    </location>
    <ligand>
        <name>substrate</name>
    </ligand>
</feature>
<feature type="binding site" evidence="1">
    <location>
        <position position="101"/>
    </location>
    <ligand>
        <name>substrate</name>
    </ligand>
</feature>
<feature type="binding site" evidence="1">
    <location>
        <position position="108"/>
    </location>
    <ligand>
        <name>NAD(+)</name>
        <dbReference type="ChEBI" id="CHEBI:57540"/>
    </ligand>
</feature>
<feature type="binding site" evidence="1 2">
    <location>
        <position position="115"/>
    </location>
    <ligand>
        <name>NAD(+)</name>
        <dbReference type="ChEBI" id="CHEBI:57540"/>
    </ligand>
</feature>
<feature type="binding site" evidence="1 2">
    <location>
        <begin position="132"/>
        <end position="134"/>
    </location>
    <ligand>
        <name>NAD(+)</name>
        <dbReference type="ChEBI" id="CHEBI:57540"/>
    </ligand>
</feature>
<feature type="binding site" evidence="1">
    <location>
        <position position="134"/>
    </location>
    <ligand>
        <name>substrate</name>
    </ligand>
</feature>
<feature type="binding site" evidence="1 4">
    <location>
        <position position="165"/>
    </location>
    <ligand>
        <name>substrate</name>
    </ligand>
</feature>
<feature type="strand" evidence="5">
    <location>
        <begin position="6"/>
        <end position="12"/>
    </location>
</feature>
<feature type="helix" evidence="5">
    <location>
        <begin position="16"/>
        <end position="26"/>
    </location>
</feature>
<feature type="turn" evidence="5">
    <location>
        <begin position="27"/>
        <end position="31"/>
    </location>
</feature>
<feature type="strand" evidence="5">
    <location>
        <begin position="37"/>
        <end position="42"/>
    </location>
</feature>
<feature type="helix" evidence="5">
    <location>
        <begin position="47"/>
        <end position="61"/>
    </location>
</feature>
<feature type="turn" evidence="5">
    <location>
        <begin position="62"/>
        <end position="64"/>
    </location>
</feature>
<feature type="strand" evidence="5">
    <location>
        <begin position="68"/>
        <end position="76"/>
    </location>
</feature>
<feature type="helix" evidence="5">
    <location>
        <begin position="77"/>
        <end position="80"/>
    </location>
</feature>
<feature type="turn" evidence="5">
    <location>
        <begin position="81"/>
        <end position="83"/>
    </location>
</feature>
<feature type="strand" evidence="5">
    <location>
        <begin position="85"/>
        <end position="89"/>
    </location>
</feature>
<feature type="helix" evidence="5">
    <location>
        <begin position="101"/>
        <end position="122"/>
    </location>
</feature>
<feature type="strand" evidence="5">
    <location>
        <begin position="128"/>
        <end position="131"/>
    </location>
</feature>
<feature type="strand" evidence="5">
    <location>
        <begin position="133"/>
        <end position="135"/>
    </location>
</feature>
<feature type="helix" evidence="5">
    <location>
        <begin position="136"/>
        <end position="145"/>
    </location>
</feature>
<feature type="helix" evidence="5">
    <location>
        <begin position="152"/>
        <end position="154"/>
    </location>
</feature>
<feature type="strand" evidence="5">
    <location>
        <begin position="155"/>
        <end position="157"/>
    </location>
</feature>
<feature type="helix" evidence="5">
    <location>
        <begin position="160"/>
        <end position="174"/>
    </location>
</feature>
<feature type="helix" evidence="5">
    <location>
        <begin position="178"/>
        <end position="180"/>
    </location>
</feature>
<feature type="strand" evidence="5">
    <location>
        <begin position="181"/>
        <end position="183"/>
    </location>
</feature>
<feature type="strand" evidence="5">
    <location>
        <begin position="185"/>
        <end position="188"/>
    </location>
</feature>
<feature type="strand" evidence="5">
    <location>
        <begin position="195"/>
        <end position="197"/>
    </location>
</feature>
<feature type="helix" evidence="5">
    <location>
        <begin position="208"/>
        <end position="212"/>
    </location>
</feature>
<feature type="helix" evidence="5">
    <location>
        <begin position="215"/>
        <end position="220"/>
    </location>
</feature>
<feature type="helix" evidence="5">
    <location>
        <begin position="222"/>
        <end position="227"/>
    </location>
</feature>
<feature type="helix" evidence="5">
    <location>
        <begin position="229"/>
        <end position="237"/>
    </location>
</feature>
<feature type="helix" evidence="5">
    <location>
        <begin position="242"/>
        <end position="258"/>
    </location>
</feature>
<feature type="strand" evidence="5">
    <location>
        <begin position="265"/>
        <end position="270"/>
    </location>
</feature>
<feature type="helix" evidence="5">
    <location>
        <begin position="274"/>
        <end position="276"/>
    </location>
</feature>
<feature type="strand" evidence="5">
    <location>
        <begin position="282"/>
        <end position="290"/>
    </location>
</feature>
<feature type="strand" evidence="5">
    <location>
        <begin position="293"/>
        <end position="296"/>
    </location>
</feature>
<feature type="helix" evidence="5">
    <location>
        <begin position="304"/>
        <end position="324"/>
    </location>
</feature>
<feature type="helix" evidence="5">
    <location>
        <begin position="325"/>
        <end position="328"/>
    </location>
</feature>
<dbReference type="EC" id="1.1.1.37" evidence="1"/>
<dbReference type="EMBL" id="AF109682">
    <property type="protein sequence ID" value="AAD13225.1"/>
    <property type="molecule type" value="Genomic_DNA"/>
</dbReference>
<dbReference type="PDB" id="1B8P">
    <property type="method" value="X-ray"/>
    <property type="resolution" value="1.90 A"/>
    <property type="chains" value="A=1-329"/>
</dbReference>
<dbReference type="PDB" id="1B8U">
    <property type="method" value="X-ray"/>
    <property type="resolution" value="2.50 A"/>
    <property type="chains" value="A=1-329"/>
</dbReference>
<dbReference type="PDB" id="1B8V">
    <property type="method" value="X-ray"/>
    <property type="resolution" value="2.10 A"/>
    <property type="chains" value="A=1-329"/>
</dbReference>
<dbReference type="PDBsum" id="1B8P"/>
<dbReference type="PDBsum" id="1B8U"/>
<dbReference type="PDBsum" id="1B8V"/>
<dbReference type="SMR" id="Q9ZF99"/>
<dbReference type="DrugBank" id="DB02637">
    <property type="generic name" value="Oxaloacetate Ion"/>
</dbReference>
<dbReference type="BRENDA" id="1.1.1.37">
    <property type="organism ID" value="17133"/>
</dbReference>
<dbReference type="SABIO-RK" id="Q9ZF99"/>
<dbReference type="EvolutionaryTrace" id="Q9ZF99"/>
<dbReference type="GO" id="GO:0030060">
    <property type="term" value="F:L-malate dehydrogenase (NAD+) activity"/>
    <property type="evidence" value="ECO:0007669"/>
    <property type="project" value="UniProtKB-UniRule"/>
</dbReference>
<dbReference type="GO" id="GO:0006108">
    <property type="term" value="P:malate metabolic process"/>
    <property type="evidence" value="ECO:0007669"/>
    <property type="project" value="InterPro"/>
</dbReference>
<dbReference type="GO" id="GO:0006099">
    <property type="term" value="P:tricarboxylic acid cycle"/>
    <property type="evidence" value="ECO:0007669"/>
    <property type="project" value="UniProtKB-UniRule"/>
</dbReference>
<dbReference type="CDD" id="cd01338">
    <property type="entry name" value="MDH_chloroplast-like"/>
    <property type="match status" value="1"/>
</dbReference>
<dbReference type="FunFam" id="3.40.50.720:FF:000010">
    <property type="entry name" value="Malate dehydrogenase"/>
    <property type="match status" value="1"/>
</dbReference>
<dbReference type="FunFam" id="3.90.110.10:FF:000002">
    <property type="entry name" value="Malate dehydrogenase"/>
    <property type="match status" value="1"/>
</dbReference>
<dbReference type="Gene3D" id="3.90.110.10">
    <property type="entry name" value="Lactate dehydrogenase/glycoside hydrolase, family 4, C-terminal"/>
    <property type="match status" value="1"/>
</dbReference>
<dbReference type="Gene3D" id="3.40.50.720">
    <property type="entry name" value="NAD(P)-binding Rossmann-like Domain"/>
    <property type="match status" value="1"/>
</dbReference>
<dbReference type="HAMAP" id="MF_01517">
    <property type="entry name" value="Malate_dehydrog_2"/>
    <property type="match status" value="1"/>
</dbReference>
<dbReference type="InterPro" id="IPR001557">
    <property type="entry name" value="L-lactate/malate_DH"/>
</dbReference>
<dbReference type="InterPro" id="IPR022383">
    <property type="entry name" value="Lactate/malate_DH_C"/>
</dbReference>
<dbReference type="InterPro" id="IPR001236">
    <property type="entry name" value="Lactate/malate_DH_N"/>
</dbReference>
<dbReference type="InterPro" id="IPR015955">
    <property type="entry name" value="Lactate_DH/Glyco_Ohase_4_C"/>
</dbReference>
<dbReference type="InterPro" id="IPR010945">
    <property type="entry name" value="Malate_DH_type2"/>
</dbReference>
<dbReference type="InterPro" id="IPR036291">
    <property type="entry name" value="NAD(P)-bd_dom_sf"/>
</dbReference>
<dbReference type="NCBIfam" id="TIGR01759">
    <property type="entry name" value="MalateDH-SF1"/>
    <property type="match status" value="1"/>
</dbReference>
<dbReference type="NCBIfam" id="NF003916">
    <property type="entry name" value="PRK05442.1"/>
    <property type="match status" value="1"/>
</dbReference>
<dbReference type="PANTHER" id="PTHR23382">
    <property type="entry name" value="MALATE DEHYDROGENASE"/>
    <property type="match status" value="1"/>
</dbReference>
<dbReference type="Pfam" id="PF02866">
    <property type="entry name" value="Ldh_1_C"/>
    <property type="match status" value="1"/>
</dbReference>
<dbReference type="Pfam" id="PF00056">
    <property type="entry name" value="Ldh_1_N"/>
    <property type="match status" value="1"/>
</dbReference>
<dbReference type="PIRSF" id="PIRSF000102">
    <property type="entry name" value="Lac_mal_DH"/>
    <property type="match status" value="1"/>
</dbReference>
<dbReference type="SUPFAM" id="SSF56327">
    <property type="entry name" value="LDH C-terminal domain-like"/>
    <property type="match status" value="1"/>
</dbReference>
<dbReference type="SUPFAM" id="SSF51735">
    <property type="entry name" value="NAD(P)-binding Rossmann-fold domains"/>
    <property type="match status" value="1"/>
</dbReference>
<organism>
    <name type="scientific">Aquaspirillum arcticum</name>
    <dbReference type="NCBI Taxonomy" id="87645"/>
    <lineage>
        <taxon>Bacteria</taxon>
        <taxon>Pseudomonadati</taxon>
        <taxon>Pseudomonadota</taxon>
        <taxon>Betaproteobacteria</taxon>
        <taxon>Neisseriales</taxon>
        <taxon>Aquaspirillaceae</taxon>
        <taxon>Aquaspirillum</taxon>
    </lineage>
</organism>
<accession>Q9ZF99</accession>